<organism>
    <name type="scientific">Cyriopagopus hainanus</name>
    <name type="common">Chinese bird spider</name>
    <name type="synonym">Haplopelma hainanum</name>
    <dbReference type="NCBI Taxonomy" id="209901"/>
    <lineage>
        <taxon>Eukaryota</taxon>
        <taxon>Metazoa</taxon>
        <taxon>Ecdysozoa</taxon>
        <taxon>Arthropoda</taxon>
        <taxon>Chelicerata</taxon>
        <taxon>Arachnida</taxon>
        <taxon>Araneae</taxon>
        <taxon>Mygalomorphae</taxon>
        <taxon>Theraphosidae</taxon>
        <taxon>Haplopelma</taxon>
    </lineage>
</organism>
<proteinExistence type="evidence at transcript level"/>
<evidence type="ECO:0000250" key="1"/>
<evidence type="ECO:0000255" key="2"/>
<name>H18B1_CYRHA</name>
<reference key="1">
    <citation type="journal article" date="2010" name="J. Proteome Res.">
        <title>Molecular diversification of peptide toxins from the tarantula Haplopelma hainanum (Ornithoctonus hainana) venom based on transcriptomic, peptidomic, and genomic analyses.</title>
        <authorList>
            <person name="Tang X."/>
            <person name="Zhang Y."/>
            <person name="Hu W."/>
            <person name="Xu D."/>
            <person name="Tao H."/>
            <person name="Yang X."/>
            <person name="Li Y."/>
            <person name="Jiang L."/>
            <person name="Liang S."/>
        </authorList>
    </citation>
    <scope>NUCLEOTIDE SEQUENCE [LARGE SCALE MRNA]</scope>
    <source>
        <tissue>Venom gland</tissue>
    </source>
</reference>
<protein>
    <recommendedName>
        <fullName>Hainantoxin-XVIII-2</fullName>
        <shortName>HNTX-XVIII-2</shortName>
    </recommendedName>
</protein>
<keyword id="KW-1015">Disulfide bond</keyword>
<keyword id="KW-0872">Ion channel impairing toxin</keyword>
<keyword id="KW-0960">Knottin</keyword>
<keyword id="KW-0964">Secreted</keyword>
<keyword id="KW-0732">Signal</keyword>
<keyword id="KW-0800">Toxin</keyword>
<accession>D2Y252</accession>
<feature type="signal peptide" evidence="2">
    <location>
        <begin position="1"/>
        <end position="18"/>
    </location>
</feature>
<feature type="propeptide" id="PRO_0000401039" evidence="1">
    <location>
        <begin position="19"/>
        <end position="46"/>
    </location>
</feature>
<feature type="peptide" id="PRO_0000401040" description="Hainantoxin-XVIII-2">
    <location>
        <begin position="47"/>
        <end position="109"/>
    </location>
</feature>
<feature type="disulfide bond" evidence="1">
    <location>
        <begin position="47"/>
        <end position="62"/>
    </location>
</feature>
<feature type="disulfide bond" evidence="1">
    <location>
        <begin position="59"/>
        <end position="108"/>
    </location>
</feature>
<feature type="disulfide bond" evidence="1">
    <location>
        <begin position="61"/>
        <end position="81"/>
    </location>
</feature>
<dbReference type="EMBL" id="GU292929">
    <property type="protein sequence ID" value="ADB56745.1"/>
    <property type="molecule type" value="mRNA"/>
</dbReference>
<dbReference type="ArachnoServer" id="AS001578">
    <property type="toxin name" value="U14-theraphotoxin-Hhn1b"/>
</dbReference>
<dbReference type="GO" id="GO:0005576">
    <property type="term" value="C:extracellular region"/>
    <property type="evidence" value="ECO:0007669"/>
    <property type="project" value="UniProtKB-SubCell"/>
</dbReference>
<dbReference type="GO" id="GO:0099106">
    <property type="term" value="F:ion channel regulator activity"/>
    <property type="evidence" value="ECO:0007669"/>
    <property type="project" value="UniProtKB-KW"/>
</dbReference>
<dbReference type="GO" id="GO:0090729">
    <property type="term" value="F:toxin activity"/>
    <property type="evidence" value="ECO:0007669"/>
    <property type="project" value="UniProtKB-KW"/>
</dbReference>
<comment type="function">
    <text>Putative ion channel inhibitor.</text>
</comment>
<comment type="subcellular location">
    <subcellularLocation>
        <location evidence="1">Secreted</location>
    </subcellularLocation>
</comment>
<comment type="tissue specificity">
    <text>Expressed by the venom gland.</text>
</comment>
<comment type="domain">
    <text evidence="1">The presence of a 'disulfide through disulfide knot' structurally defines this protein as a knottin.</text>
</comment>
<comment type="similarity">
    <text>Belongs to the neurotoxin 25 family. F7 subfamily.</text>
</comment>
<sequence>MKLSIIIIATSLVIAVVAFPSKDSKAIENDKTEQRMEIVVQETARACSKQIGDKRKRNCECCGKTVVCGTIYVGGKEVNQCMDKTSDNAILNGLGKGMNFIENTFSFCV</sequence>